<gene>
    <name evidence="11" type="primary">Cenph</name>
    <name evidence="9" type="synonym">Enp</name>
</gene>
<sequence length="241" mass="28135">MEEQPRERSEAGAEACEEKRGLSQAAEERIEDRISLLLRLRAQTKQQLLEYKSMIDTNEEKTPEQIMQEKQIEVKIEELENEIEDVKSNIEMKSLALSRMKLSVALRDNMENMGPENCVLTDDMKHILKLQKLIMKSQEESSELEKKLLDVRKKRLQLKQASRSKLLEIQIEKNKQKEDVDKMENSEMIKTMKKKLQTEIKITTVVQHTFQGLILASKTNWAEDPALRETVLQLEKDLNTL</sequence>
<reference evidence="7 9" key="1">
    <citation type="journal article" date="1999" name="J. Biol. Chem.">
        <title>Characterization of a novel kinetochore protein, CENP-H.</title>
        <authorList>
            <person name="Sugata N."/>
            <person name="Munekata E."/>
            <person name="Todokoro K."/>
        </authorList>
    </citation>
    <scope>NUCLEOTIDE SEQUENCE [MRNA]</scope>
    <scope>SUBCELLULAR LOCATION</scope>
    <scope>TISSUE SPECIFICITY</scope>
    <scope>DEVELOPMENTAL STAGE</scope>
</reference>
<reference evidence="10" key="2">
    <citation type="journal article" date="2005" name="Science">
        <title>The transcriptional landscape of the mammalian genome.</title>
        <authorList>
            <person name="Carninci P."/>
            <person name="Kasukawa T."/>
            <person name="Katayama S."/>
            <person name="Gough J."/>
            <person name="Frith M.C."/>
            <person name="Maeda N."/>
            <person name="Oyama R."/>
            <person name="Ravasi T."/>
            <person name="Lenhard B."/>
            <person name="Wells C."/>
            <person name="Kodzius R."/>
            <person name="Shimokawa K."/>
            <person name="Bajic V.B."/>
            <person name="Brenner S.E."/>
            <person name="Batalov S."/>
            <person name="Forrest A.R."/>
            <person name="Zavolan M."/>
            <person name="Davis M.J."/>
            <person name="Wilming L.G."/>
            <person name="Aidinis V."/>
            <person name="Allen J.E."/>
            <person name="Ambesi-Impiombato A."/>
            <person name="Apweiler R."/>
            <person name="Aturaliya R.N."/>
            <person name="Bailey T.L."/>
            <person name="Bansal M."/>
            <person name="Baxter L."/>
            <person name="Beisel K.W."/>
            <person name="Bersano T."/>
            <person name="Bono H."/>
            <person name="Chalk A.M."/>
            <person name="Chiu K.P."/>
            <person name="Choudhary V."/>
            <person name="Christoffels A."/>
            <person name="Clutterbuck D.R."/>
            <person name="Crowe M.L."/>
            <person name="Dalla E."/>
            <person name="Dalrymple B.P."/>
            <person name="de Bono B."/>
            <person name="Della Gatta G."/>
            <person name="di Bernardo D."/>
            <person name="Down T."/>
            <person name="Engstrom P."/>
            <person name="Fagiolini M."/>
            <person name="Faulkner G."/>
            <person name="Fletcher C.F."/>
            <person name="Fukushima T."/>
            <person name="Furuno M."/>
            <person name="Futaki S."/>
            <person name="Gariboldi M."/>
            <person name="Georgii-Hemming P."/>
            <person name="Gingeras T.R."/>
            <person name="Gojobori T."/>
            <person name="Green R.E."/>
            <person name="Gustincich S."/>
            <person name="Harbers M."/>
            <person name="Hayashi Y."/>
            <person name="Hensch T.K."/>
            <person name="Hirokawa N."/>
            <person name="Hill D."/>
            <person name="Huminiecki L."/>
            <person name="Iacono M."/>
            <person name="Ikeo K."/>
            <person name="Iwama A."/>
            <person name="Ishikawa T."/>
            <person name="Jakt M."/>
            <person name="Kanapin A."/>
            <person name="Katoh M."/>
            <person name="Kawasawa Y."/>
            <person name="Kelso J."/>
            <person name="Kitamura H."/>
            <person name="Kitano H."/>
            <person name="Kollias G."/>
            <person name="Krishnan S.P."/>
            <person name="Kruger A."/>
            <person name="Kummerfeld S.K."/>
            <person name="Kurochkin I.V."/>
            <person name="Lareau L.F."/>
            <person name="Lazarevic D."/>
            <person name="Lipovich L."/>
            <person name="Liu J."/>
            <person name="Liuni S."/>
            <person name="McWilliam S."/>
            <person name="Madan Babu M."/>
            <person name="Madera M."/>
            <person name="Marchionni L."/>
            <person name="Matsuda H."/>
            <person name="Matsuzawa S."/>
            <person name="Miki H."/>
            <person name="Mignone F."/>
            <person name="Miyake S."/>
            <person name="Morris K."/>
            <person name="Mottagui-Tabar S."/>
            <person name="Mulder N."/>
            <person name="Nakano N."/>
            <person name="Nakauchi H."/>
            <person name="Ng P."/>
            <person name="Nilsson R."/>
            <person name="Nishiguchi S."/>
            <person name="Nishikawa S."/>
            <person name="Nori F."/>
            <person name="Ohara O."/>
            <person name="Okazaki Y."/>
            <person name="Orlando V."/>
            <person name="Pang K.C."/>
            <person name="Pavan W.J."/>
            <person name="Pavesi G."/>
            <person name="Pesole G."/>
            <person name="Petrovsky N."/>
            <person name="Piazza S."/>
            <person name="Reed J."/>
            <person name="Reid J.F."/>
            <person name="Ring B.Z."/>
            <person name="Ringwald M."/>
            <person name="Rost B."/>
            <person name="Ruan Y."/>
            <person name="Salzberg S.L."/>
            <person name="Sandelin A."/>
            <person name="Schneider C."/>
            <person name="Schoenbach C."/>
            <person name="Sekiguchi K."/>
            <person name="Semple C.A."/>
            <person name="Seno S."/>
            <person name="Sessa L."/>
            <person name="Sheng Y."/>
            <person name="Shibata Y."/>
            <person name="Shimada H."/>
            <person name="Shimada K."/>
            <person name="Silva D."/>
            <person name="Sinclair B."/>
            <person name="Sperling S."/>
            <person name="Stupka E."/>
            <person name="Sugiura K."/>
            <person name="Sultana R."/>
            <person name="Takenaka Y."/>
            <person name="Taki K."/>
            <person name="Tammoja K."/>
            <person name="Tan S.L."/>
            <person name="Tang S."/>
            <person name="Taylor M.S."/>
            <person name="Tegner J."/>
            <person name="Teichmann S.A."/>
            <person name="Ueda H.R."/>
            <person name="van Nimwegen E."/>
            <person name="Verardo R."/>
            <person name="Wei C.L."/>
            <person name="Yagi K."/>
            <person name="Yamanishi H."/>
            <person name="Zabarovsky E."/>
            <person name="Zhu S."/>
            <person name="Zimmer A."/>
            <person name="Hide W."/>
            <person name="Bult C."/>
            <person name="Grimmond S.M."/>
            <person name="Teasdale R.D."/>
            <person name="Liu E.T."/>
            <person name="Brusic V."/>
            <person name="Quackenbush J."/>
            <person name="Wahlestedt C."/>
            <person name="Mattick J.S."/>
            <person name="Hume D.A."/>
            <person name="Kai C."/>
            <person name="Sasaki D."/>
            <person name="Tomaru Y."/>
            <person name="Fukuda S."/>
            <person name="Kanamori-Katayama M."/>
            <person name="Suzuki M."/>
            <person name="Aoki J."/>
            <person name="Arakawa T."/>
            <person name="Iida J."/>
            <person name="Imamura K."/>
            <person name="Itoh M."/>
            <person name="Kato T."/>
            <person name="Kawaji H."/>
            <person name="Kawagashira N."/>
            <person name="Kawashima T."/>
            <person name="Kojima M."/>
            <person name="Kondo S."/>
            <person name="Konno H."/>
            <person name="Nakano K."/>
            <person name="Ninomiya N."/>
            <person name="Nishio T."/>
            <person name="Okada M."/>
            <person name="Plessy C."/>
            <person name="Shibata K."/>
            <person name="Shiraki T."/>
            <person name="Suzuki S."/>
            <person name="Tagami M."/>
            <person name="Waki K."/>
            <person name="Watahiki A."/>
            <person name="Okamura-Oho Y."/>
            <person name="Suzuki H."/>
            <person name="Kawai J."/>
            <person name="Hayashizaki Y."/>
        </authorList>
    </citation>
    <scope>NUCLEOTIDE SEQUENCE [LARGE SCALE MRNA]</scope>
    <source>
        <strain evidence="10">C57BL/6J</strain>
        <tissue evidence="10">Embryo</tissue>
    </source>
</reference>
<reference evidence="8" key="3">
    <citation type="journal article" date="2004" name="Genome Res.">
        <title>The status, quality, and expansion of the NIH full-length cDNA project: the Mammalian Gene Collection (MGC).</title>
        <authorList>
            <consortium name="The MGC Project Team"/>
        </authorList>
    </citation>
    <scope>NUCLEOTIDE SEQUENCE [LARGE SCALE MRNA]</scope>
    <source>
        <strain evidence="8">Czech II</strain>
        <tissue evidence="8">Mammary gland</tissue>
    </source>
</reference>
<reference key="4">
    <citation type="journal article" date="2009" name="Biochem. Biophys. Res. Commun.">
        <title>TRIM36 interacts with the kinetochore protein CENP-H and delays cell cycle progression.</title>
        <authorList>
            <person name="Miyajima N."/>
            <person name="Maruyama S."/>
            <person name="Nonomura K."/>
            <person name="Hatakeyama S."/>
        </authorList>
    </citation>
    <scope>INTERACTION WITH TRIM36</scope>
</reference>
<dbReference type="EMBL" id="AB017634">
    <property type="protein sequence ID" value="BAA88520.1"/>
    <property type="molecule type" value="mRNA"/>
</dbReference>
<dbReference type="EMBL" id="AK011264">
    <property type="protein sequence ID" value="BAB27505.1"/>
    <property type="status" value="ALT_FRAME"/>
    <property type="molecule type" value="mRNA"/>
</dbReference>
<dbReference type="EMBL" id="AK011738">
    <property type="protein sequence ID" value="BAB27810.1"/>
    <property type="status" value="ALT_FRAME"/>
    <property type="molecule type" value="mRNA"/>
</dbReference>
<dbReference type="EMBL" id="BC025084">
    <property type="protein sequence ID" value="AAH25084.1"/>
    <property type="molecule type" value="mRNA"/>
</dbReference>
<dbReference type="CCDS" id="CCDS26738.1"/>
<dbReference type="RefSeq" id="NP_068686.1">
    <property type="nucleotide sequence ID" value="NM_021886.3"/>
</dbReference>
<dbReference type="SMR" id="Q9QYM8"/>
<dbReference type="BioGRID" id="205039">
    <property type="interactions" value="42"/>
</dbReference>
<dbReference type="ComplexPortal" id="CPX-5704">
    <property type="entry name" value="Kinetochore CCAN complex"/>
</dbReference>
<dbReference type="FunCoup" id="Q9QYM8">
    <property type="interactions" value="1033"/>
</dbReference>
<dbReference type="IntAct" id="Q9QYM8">
    <property type="interactions" value="25"/>
</dbReference>
<dbReference type="STRING" id="10090.ENSMUSP00000074988"/>
<dbReference type="PhosphoSitePlus" id="Q9QYM8"/>
<dbReference type="PaxDb" id="10090-ENSMUSP00000074988"/>
<dbReference type="PeptideAtlas" id="Q9QYM8"/>
<dbReference type="ProteomicsDB" id="281537"/>
<dbReference type="Pumba" id="Q9QYM8"/>
<dbReference type="Antibodypedia" id="23919">
    <property type="antibodies" value="410 antibodies from 31 providers"/>
</dbReference>
<dbReference type="DNASU" id="26886"/>
<dbReference type="Ensembl" id="ENSMUST00000075550.4">
    <property type="protein sequence ID" value="ENSMUSP00000074988.4"/>
    <property type="gene ID" value="ENSMUSG00000045273.9"/>
</dbReference>
<dbReference type="GeneID" id="26886"/>
<dbReference type="KEGG" id="mmu:26886"/>
<dbReference type="UCSC" id="uc007rrn.1">
    <property type="organism name" value="mouse"/>
</dbReference>
<dbReference type="AGR" id="MGI:1349448"/>
<dbReference type="CTD" id="64946"/>
<dbReference type="MGI" id="MGI:1349448">
    <property type="gene designation" value="Cenph"/>
</dbReference>
<dbReference type="VEuPathDB" id="HostDB:ENSMUSG00000045273"/>
<dbReference type="eggNOG" id="ENOG502S0VG">
    <property type="taxonomic scope" value="Eukaryota"/>
</dbReference>
<dbReference type="GeneTree" id="ENSGT00390000009578"/>
<dbReference type="HOGENOM" id="CLU_097390_0_0_1"/>
<dbReference type="InParanoid" id="Q9QYM8"/>
<dbReference type="OMA" id="KSHQESW"/>
<dbReference type="OrthoDB" id="2274804at2759"/>
<dbReference type="PhylomeDB" id="Q9QYM8"/>
<dbReference type="TreeFam" id="TF101134"/>
<dbReference type="Reactome" id="R-MMU-141444">
    <property type="pathway name" value="Amplification of signal from unattached kinetochores via a MAD2 inhibitory signal"/>
</dbReference>
<dbReference type="Reactome" id="R-MMU-2467813">
    <property type="pathway name" value="Separation of Sister Chromatids"/>
</dbReference>
<dbReference type="Reactome" id="R-MMU-2500257">
    <property type="pathway name" value="Resolution of Sister Chromatid Cohesion"/>
</dbReference>
<dbReference type="Reactome" id="R-MMU-5663220">
    <property type="pathway name" value="RHO GTPases Activate Formins"/>
</dbReference>
<dbReference type="Reactome" id="R-MMU-606279">
    <property type="pathway name" value="Deposition of new CENPA-containing nucleosomes at the centromere"/>
</dbReference>
<dbReference type="Reactome" id="R-MMU-68877">
    <property type="pathway name" value="Mitotic Prometaphase"/>
</dbReference>
<dbReference type="Reactome" id="R-MMU-9648025">
    <property type="pathway name" value="EML4 and NUDC in mitotic spindle formation"/>
</dbReference>
<dbReference type="BioGRID-ORCS" id="26886">
    <property type="hits" value="20 hits in 76 CRISPR screens"/>
</dbReference>
<dbReference type="ChiTaRS" id="Cenph">
    <property type="organism name" value="mouse"/>
</dbReference>
<dbReference type="PRO" id="PR:Q9QYM8"/>
<dbReference type="Proteomes" id="UP000000589">
    <property type="component" value="Chromosome 13"/>
</dbReference>
<dbReference type="RNAct" id="Q9QYM8">
    <property type="molecule type" value="protein"/>
</dbReference>
<dbReference type="Bgee" id="ENSMUSG00000045273">
    <property type="expression patterns" value="Expressed in dorsal pancreas and 160 other cell types or tissues"/>
</dbReference>
<dbReference type="GO" id="GO:0000939">
    <property type="term" value="C:inner kinetochore"/>
    <property type="evidence" value="ECO:0000266"/>
    <property type="project" value="ComplexPortal"/>
</dbReference>
<dbReference type="GO" id="GO:0000776">
    <property type="term" value="C:kinetochore"/>
    <property type="evidence" value="ECO:0000314"/>
    <property type="project" value="MGI"/>
</dbReference>
<dbReference type="GO" id="GO:0005730">
    <property type="term" value="C:nucleolus"/>
    <property type="evidence" value="ECO:0007669"/>
    <property type="project" value="Ensembl"/>
</dbReference>
<dbReference type="GO" id="GO:0005654">
    <property type="term" value="C:nucleoplasm"/>
    <property type="evidence" value="ECO:0007669"/>
    <property type="project" value="Ensembl"/>
</dbReference>
<dbReference type="GO" id="GO:0005634">
    <property type="term" value="C:nucleus"/>
    <property type="evidence" value="ECO:0000314"/>
    <property type="project" value="UniProtKB"/>
</dbReference>
<dbReference type="GO" id="GO:0043515">
    <property type="term" value="F:kinetochore binding"/>
    <property type="evidence" value="ECO:0000314"/>
    <property type="project" value="UniProtKB"/>
</dbReference>
<dbReference type="GO" id="GO:0007059">
    <property type="term" value="P:chromosome segregation"/>
    <property type="evidence" value="ECO:0000266"/>
    <property type="project" value="MGI"/>
</dbReference>
<dbReference type="GO" id="GO:0051382">
    <property type="term" value="P:kinetochore assembly"/>
    <property type="evidence" value="ECO:0007669"/>
    <property type="project" value="InterPro"/>
</dbReference>
<dbReference type="GO" id="GO:0051383">
    <property type="term" value="P:kinetochore organization"/>
    <property type="evidence" value="ECO:0000304"/>
    <property type="project" value="UniProtKB"/>
</dbReference>
<dbReference type="GO" id="GO:0000278">
    <property type="term" value="P:mitotic cell cycle"/>
    <property type="evidence" value="ECO:0000266"/>
    <property type="project" value="MGI"/>
</dbReference>
<dbReference type="InterPro" id="IPR040034">
    <property type="entry name" value="CENP-H"/>
</dbReference>
<dbReference type="InterPro" id="IPR008426">
    <property type="entry name" value="CENP-H_C"/>
</dbReference>
<dbReference type="PANTHER" id="PTHR48122">
    <property type="entry name" value="CENTROMERE PROTEIN H"/>
    <property type="match status" value="1"/>
</dbReference>
<dbReference type="PANTHER" id="PTHR48122:SF1">
    <property type="entry name" value="CENTROMERE PROTEIN H"/>
    <property type="match status" value="1"/>
</dbReference>
<dbReference type="Pfam" id="PF05837">
    <property type="entry name" value="CENP-H"/>
    <property type="match status" value="1"/>
</dbReference>
<protein>
    <recommendedName>
        <fullName>Centromere protein H</fullName>
        <shortName>CENP-H</shortName>
    </recommendedName>
</protein>
<accession>Q9QYM8</accession>
<accession>Q8R3K9</accession>
<accession>Q9D079</accession>
<accession>Q9D0N1</accession>
<name>CENPH_MOUSE</name>
<comment type="function">
    <text evidence="1">Component of the CENPA-NAC (nucleosome-associated) complex, a complex that plays a central role in assembly of kinetochore proteins, mitotic progression and chromosome segregation. The CENPA-NAC complex recruits the CENPA-CAD (nucleosome distal) complex and may be involved in incorporation of newly synthesized CENPA into centromeres. Required for chromosome congression and efficiently align the chromosomes on a metaphase plate (By similarity).</text>
</comment>
<comment type="subunit">
    <text evidence="1 6">Self-associates. Component of the CENPA-NAC complex, at least composed of CENPA, CENPC, CENPH, CENPM, CENPN, CENPT and CENPU. The CENPA-NAC complex interacts with the CENPA-CAD complex, composed of CENPI, CENPK, CENPL, CENPO, CENPP, CENPQ, CENPR and CENPS (By similarity). Interacts directly with CENPK (By similarity). Interacts with KIF2C and NDC80 (By similarity). Interacts with TRIM36.</text>
</comment>
<comment type="subcellular location">
    <subcellularLocation>
        <location evidence="5">Nucleus</location>
    </subcellularLocation>
    <subcellularLocation>
        <location evidence="5">Chromosome</location>
        <location evidence="5">Centromere</location>
        <location evidence="5">Kinetochore</location>
    </subcellularLocation>
    <text>Associates with active centromere-kinetochore complexes throughout the cell cycle. Colocalizes with inner kinetochore plate proteins CENPA and CENPC during both interphase and metaphase.</text>
</comment>
<comment type="tissue specificity">
    <text evidence="5">Abundantly expressed in thymus, spleen, uterus, ovary, testis and muscle, and weakly expressed in small intestine, lung and stomach. Barely detectable expression in kidney, liver, skin and prostate gland. Not detected in brain, heart or adrenal gland. Also expressed weakly in various hematopoietic cell lines.</text>
</comment>
<comment type="developmental stage">
    <text evidence="5">Abundantly expressed between embryonic day 9.5 and 12.5.</text>
</comment>
<comment type="similarity">
    <text evidence="3">Belongs to the CENP-H/MCM16 family.</text>
</comment>
<comment type="sequence caution" evidence="7">
    <conflict type="frameshift">
        <sequence resource="EMBL-CDS" id="BAB27505"/>
    </conflict>
</comment>
<comment type="sequence caution" evidence="7">
    <conflict type="frameshift">
        <sequence resource="EMBL-CDS" id="BAB27810"/>
    </conflict>
</comment>
<keyword id="KW-0007">Acetylation</keyword>
<keyword id="KW-0137">Centromere</keyword>
<keyword id="KW-0158">Chromosome</keyword>
<keyword id="KW-0175">Coiled coil</keyword>
<keyword id="KW-1017">Isopeptide bond</keyword>
<keyword id="KW-0995">Kinetochore</keyword>
<keyword id="KW-0539">Nucleus</keyword>
<keyword id="KW-0597">Phosphoprotein</keyword>
<keyword id="KW-1185">Reference proteome</keyword>
<keyword id="KW-0832">Ubl conjugation</keyword>
<organism>
    <name type="scientific">Mus musculus</name>
    <name type="common">Mouse</name>
    <dbReference type="NCBI Taxonomy" id="10090"/>
    <lineage>
        <taxon>Eukaryota</taxon>
        <taxon>Metazoa</taxon>
        <taxon>Chordata</taxon>
        <taxon>Craniata</taxon>
        <taxon>Vertebrata</taxon>
        <taxon>Euteleostomi</taxon>
        <taxon>Mammalia</taxon>
        <taxon>Eutheria</taxon>
        <taxon>Euarchontoglires</taxon>
        <taxon>Glires</taxon>
        <taxon>Rodentia</taxon>
        <taxon>Myomorpha</taxon>
        <taxon>Muroidea</taxon>
        <taxon>Muridae</taxon>
        <taxon>Murinae</taxon>
        <taxon>Mus</taxon>
        <taxon>Mus</taxon>
    </lineage>
</organism>
<evidence type="ECO:0000250" key="1"/>
<evidence type="ECO:0000250" key="2">
    <source>
        <dbReference type="UniProtKB" id="Q9H3R5"/>
    </source>
</evidence>
<evidence type="ECO:0000255" key="3"/>
<evidence type="ECO:0000256" key="4">
    <source>
        <dbReference type="SAM" id="MobiDB-lite"/>
    </source>
</evidence>
<evidence type="ECO:0000269" key="5">
    <source>
    </source>
</evidence>
<evidence type="ECO:0000269" key="6">
    <source>
    </source>
</evidence>
<evidence type="ECO:0000305" key="7"/>
<evidence type="ECO:0000312" key="8">
    <source>
        <dbReference type="EMBL" id="AAH25084.1"/>
    </source>
</evidence>
<evidence type="ECO:0000312" key="9">
    <source>
        <dbReference type="EMBL" id="BAA88520.1"/>
    </source>
</evidence>
<evidence type="ECO:0000312" key="10">
    <source>
        <dbReference type="EMBL" id="BAB27505.1"/>
    </source>
</evidence>
<evidence type="ECO:0000312" key="11">
    <source>
        <dbReference type="MGI" id="MGI:1349448"/>
    </source>
</evidence>
<feature type="chain" id="PRO_0000089479" description="Centromere protein H">
    <location>
        <begin position="1"/>
        <end position="241"/>
    </location>
</feature>
<feature type="region of interest" description="Disordered" evidence="4">
    <location>
        <begin position="1"/>
        <end position="24"/>
    </location>
</feature>
<feature type="coiled-coil region" evidence="3">
    <location>
        <begin position="28"/>
        <end position="186"/>
    </location>
</feature>
<feature type="modified residue" description="N-acetylmethionine" evidence="2">
    <location>
        <position position="1"/>
    </location>
</feature>
<feature type="modified residue" description="Phosphothreonine" evidence="2">
    <location>
        <position position="62"/>
    </location>
</feature>
<feature type="cross-link" description="Glycyl lysine isopeptide (Lys-Gly) (interchain with G-Cter in SUMO2)" evidence="2">
    <location>
        <position position="61"/>
    </location>
</feature>
<feature type="sequence conflict" description="In Ref. 3; AAH25084." evidence="7" ref="3">
    <original>N</original>
    <variation>T</variation>
    <location>
        <position position="239"/>
    </location>
</feature>
<proteinExistence type="evidence at protein level"/>